<organism>
    <name type="scientific">Escherichia coli (strain UTI89 / UPEC)</name>
    <dbReference type="NCBI Taxonomy" id="364106"/>
    <lineage>
        <taxon>Bacteria</taxon>
        <taxon>Pseudomonadati</taxon>
        <taxon>Pseudomonadota</taxon>
        <taxon>Gammaproteobacteria</taxon>
        <taxon>Enterobacterales</taxon>
        <taxon>Enterobacteriaceae</taxon>
        <taxon>Escherichia</taxon>
    </lineage>
</organism>
<gene>
    <name evidence="1" type="primary">kefB</name>
    <name type="ordered locus">UTI89_C3853</name>
</gene>
<evidence type="ECO:0000255" key="1">
    <source>
        <dbReference type="HAMAP-Rule" id="MF_01412"/>
    </source>
</evidence>
<evidence type="ECO:0000255" key="2">
    <source>
        <dbReference type="PROSITE-ProRule" id="PRU00543"/>
    </source>
</evidence>
<reference key="1">
    <citation type="journal article" date="2006" name="Proc. Natl. Acad. Sci. U.S.A.">
        <title>Identification of genes subject to positive selection in uropathogenic strains of Escherichia coli: a comparative genomics approach.</title>
        <authorList>
            <person name="Chen S.L."/>
            <person name="Hung C.-S."/>
            <person name="Xu J."/>
            <person name="Reigstad C.S."/>
            <person name="Magrini V."/>
            <person name="Sabo A."/>
            <person name="Blasiar D."/>
            <person name="Bieri T."/>
            <person name="Meyer R.R."/>
            <person name="Ozersky P."/>
            <person name="Armstrong J.R."/>
            <person name="Fulton R.S."/>
            <person name="Latreille J.P."/>
            <person name="Spieth J."/>
            <person name="Hooton T.M."/>
            <person name="Mardis E.R."/>
            <person name="Hultgren S.J."/>
            <person name="Gordon J.I."/>
        </authorList>
    </citation>
    <scope>NUCLEOTIDE SEQUENCE [LARGE SCALE GENOMIC DNA]</scope>
    <source>
        <strain>UTI89 / UPEC</strain>
    </source>
</reference>
<proteinExistence type="inferred from homology"/>
<accession>Q1R5T2</accession>
<feature type="chain" id="PRO_0000301530" description="Glutathione-regulated potassium-efflux system protein KefB">
    <location>
        <begin position="1"/>
        <end position="601"/>
    </location>
</feature>
<feature type="transmembrane region" description="Helical" evidence="1">
    <location>
        <begin position="4"/>
        <end position="24"/>
    </location>
</feature>
<feature type="transmembrane region" description="Helical" evidence="1">
    <location>
        <begin position="29"/>
        <end position="49"/>
    </location>
</feature>
<feature type="transmembrane region" description="Helical" evidence="1">
    <location>
        <begin position="55"/>
        <end position="75"/>
    </location>
</feature>
<feature type="transmembrane region" description="Helical" evidence="1">
    <location>
        <begin position="87"/>
        <end position="107"/>
    </location>
</feature>
<feature type="transmembrane region" description="Helical" evidence="1">
    <location>
        <begin position="115"/>
        <end position="135"/>
    </location>
</feature>
<feature type="transmembrane region" description="Helical" evidence="1">
    <location>
        <begin position="152"/>
        <end position="172"/>
    </location>
</feature>
<feature type="transmembrane region" description="Helical" evidence="1">
    <location>
        <begin position="177"/>
        <end position="197"/>
    </location>
</feature>
<feature type="transmembrane region" description="Helical" evidence="1">
    <location>
        <begin position="207"/>
        <end position="227"/>
    </location>
</feature>
<feature type="transmembrane region" description="Helical" evidence="1">
    <location>
        <begin position="230"/>
        <end position="250"/>
    </location>
</feature>
<feature type="transmembrane region" description="Helical" evidence="1">
    <location>
        <begin position="268"/>
        <end position="288"/>
    </location>
</feature>
<feature type="transmembrane region" description="Helical" evidence="1">
    <location>
        <begin position="291"/>
        <end position="311"/>
    </location>
</feature>
<feature type="transmembrane region" description="Helical" evidence="1">
    <location>
        <begin position="324"/>
        <end position="344"/>
    </location>
</feature>
<feature type="transmembrane region" description="Helical" evidence="1">
    <location>
        <begin position="356"/>
        <end position="376"/>
    </location>
</feature>
<feature type="domain" description="RCK N-terminal" evidence="2">
    <location>
        <begin position="400"/>
        <end position="519"/>
    </location>
</feature>
<dbReference type="EMBL" id="CP000243">
    <property type="protein sequence ID" value="ABE09282.1"/>
    <property type="molecule type" value="Genomic_DNA"/>
</dbReference>
<dbReference type="RefSeq" id="WP_000399162.1">
    <property type="nucleotide sequence ID" value="NZ_CP064825.1"/>
</dbReference>
<dbReference type="SMR" id="Q1R5T2"/>
<dbReference type="KEGG" id="eci:UTI89_C3853"/>
<dbReference type="HOGENOM" id="CLU_005126_9_3_6"/>
<dbReference type="Proteomes" id="UP000001952">
    <property type="component" value="Chromosome"/>
</dbReference>
<dbReference type="GO" id="GO:0005886">
    <property type="term" value="C:plasma membrane"/>
    <property type="evidence" value="ECO:0007669"/>
    <property type="project" value="UniProtKB-SubCell"/>
</dbReference>
<dbReference type="GO" id="GO:0015503">
    <property type="term" value="F:glutathione-regulated potassium exporter activity"/>
    <property type="evidence" value="ECO:0007669"/>
    <property type="project" value="UniProtKB-UniRule"/>
</dbReference>
<dbReference type="GO" id="GO:1902600">
    <property type="term" value="P:proton transmembrane transport"/>
    <property type="evidence" value="ECO:0007669"/>
    <property type="project" value="InterPro"/>
</dbReference>
<dbReference type="FunFam" id="1.20.1530.20:FF:000001">
    <property type="entry name" value="Glutathione-regulated potassium-efflux system protein KefB"/>
    <property type="match status" value="1"/>
</dbReference>
<dbReference type="FunFam" id="3.40.50.720:FF:000036">
    <property type="entry name" value="Glutathione-regulated potassium-efflux system protein KefB"/>
    <property type="match status" value="1"/>
</dbReference>
<dbReference type="Gene3D" id="1.20.1530.20">
    <property type="match status" value="1"/>
</dbReference>
<dbReference type="Gene3D" id="3.40.50.720">
    <property type="entry name" value="NAD(P)-binding Rossmann-like Domain"/>
    <property type="match status" value="1"/>
</dbReference>
<dbReference type="HAMAP" id="MF_01412">
    <property type="entry name" value="K_H_efflux_KefB"/>
    <property type="match status" value="1"/>
</dbReference>
<dbReference type="InterPro" id="IPR006153">
    <property type="entry name" value="Cation/H_exchanger_TM"/>
</dbReference>
<dbReference type="InterPro" id="IPR004771">
    <property type="entry name" value="K/H_exchanger"/>
</dbReference>
<dbReference type="InterPro" id="IPR020884">
    <property type="entry name" value="K_H_efflux_KefB"/>
</dbReference>
<dbReference type="InterPro" id="IPR038770">
    <property type="entry name" value="Na+/solute_symporter_sf"/>
</dbReference>
<dbReference type="InterPro" id="IPR036291">
    <property type="entry name" value="NAD(P)-bd_dom_sf"/>
</dbReference>
<dbReference type="InterPro" id="IPR003148">
    <property type="entry name" value="RCK_N"/>
</dbReference>
<dbReference type="NCBIfam" id="TIGR00932">
    <property type="entry name" value="2a37"/>
    <property type="match status" value="1"/>
</dbReference>
<dbReference type="NCBIfam" id="NF002973">
    <property type="entry name" value="PRK03659.1"/>
    <property type="match status" value="1"/>
</dbReference>
<dbReference type="PANTHER" id="PTHR46157">
    <property type="entry name" value="K(+) EFFLUX ANTIPORTER 3, CHLOROPLASTIC"/>
    <property type="match status" value="1"/>
</dbReference>
<dbReference type="PANTHER" id="PTHR46157:SF4">
    <property type="entry name" value="K(+) EFFLUX ANTIPORTER 3, CHLOROPLASTIC"/>
    <property type="match status" value="1"/>
</dbReference>
<dbReference type="Pfam" id="PF00999">
    <property type="entry name" value="Na_H_Exchanger"/>
    <property type="match status" value="1"/>
</dbReference>
<dbReference type="Pfam" id="PF02254">
    <property type="entry name" value="TrkA_N"/>
    <property type="match status" value="1"/>
</dbReference>
<dbReference type="SUPFAM" id="SSF51735">
    <property type="entry name" value="NAD(P)-binding Rossmann-fold domains"/>
    <property type="match status" value="1"/>
</dbReference>
<dbReference type="PROSITE" id="PS51201">
    <property type="entry name" value="RCK_N"/>
    <property type="match status" value="1"/>
</dbReference>
<protein>
    <recommendedName>
        <fullName evidence="1">Glutathione-regulated potassium-efflux system protein KefB</fullName>
    </recommendedName>
    <alternativeName>
        <fullName evidence="1">K(+)/H(+) antiporter</fullName>
    </alternativeName>
</protein>
<keyword id="KW-0050">Antiport</keyword>
<keyword id="KW-0997">Cell inner membrane</keyword>
<keyword id="KW-1003">Cell membrane</keyword>
<keyword id="KW-0406">Ion transport</keyword>
<keyword id="KW-0472">Membrane</keyword>
<keyword id="KW-0630">Potassium</keyword>
<keyword id="KW-0633">Potassium transport</keyword>
<keyword id="KW-0812">Transmembrane</keyword>
<keyword id="KW-1133">Transmembrane helix</keyword>
<keyword id="KW-0813">Transport</keyword>
<name>KEFB_ECOUT</name>
<sequence length="601" mass="66463">MEGSDFLLAGVLFLFAAVAAVPLASRLGIGAVLGYLLAGIAIGPWGLGFISDVDEILHFSELGVVFLMFIIGLELNPSKLWQLRRSIFGVGAAQVLLSAALLAGLLMLTHFSWQAAVVGGIGLAMSSTAMALQLMREKGMNRSESGQLGFSVLLFQDLAVIPALALVPLLAGSADEHFDWMKIGMKVLAFVGMLIGGRYLLRPVFRFIAASGVREVFTAATLLLVLGSALFMDALGLSMALGTFIAGVLLAESEYRHELETAIDPFKGLLLGLFFISVGMSLNLGVLYTHLLWVVISVVVLVAVKILVLYLLARLYGVRSSERMQFAGVLSQGGEFAFVLFSTASSQRLFQGDQMALLLVTVTLSMMTTPLLMKLVDKWLSRQFNGPEEEDEKPWVNDDKPQVIVVGFGRFGQVIGRLLMANKMRITVLERDISAVNLMRKYGYKVYYGDATQVDLLRSAGAEAAESIVITCNEPEDTMKLVEICQQHFPHLHILARARGRVEAHELLQAGVTQFSRETFSSALELGRKTLVTLGMHPHQAQRAQLHFRRLDMRMLRELIPMHADTVQISRAREARRELEEIFQREMQQERRQLDGWDEFE</sequence>
<comment type="function">
    <text evidence="1">Pore-forming subunit of a potassium efflux system that confers protection against electrophiles. Catalyzes K(+)/H(+) antiport.</text>
</comment>
<comment type="subunit">
    <text evidence="1">Interacts with the regulatory subunit KefG.</text>
</comment>
<comment type="subcellular location">
    <subcellularLocation>
        <location evidence="1">Cell inner membrane</location>
        <topology evidence="1">Multi-pass membrane protein</topology>
    </subcellularLocation>
</comment>
<comment type="similarity">
    <text evidence="1">Belongs to the monovalent cation:proton antiporter 2 (CPA2) transporter (TC 2.A.37) family. KefB subfamily.</text>
</comment>